<dbReference type="EMBL" id="DQ084030">
    <property type="protein sequence ID" value="AAZ38975.1"/>
    <property type="molecule type" value="mRNA"/>
</dbReference>
<dbReference type="SMR" id="Q3SB12"/>
<dbReference type="GO" id="GO:0005737">
    <property type="term" value="C:cytoplasm"/>
    <property type="evidence" value="ECO:0007669"/>
    <property type="project" value="UniProtKB-SubCell"/>
</dbReference>
<dbReference type="GO" id="GO:0016460">
    <property type="term" value="C:myosin II complex"/>
    <property type="evidence" value="ECO:0007669"/>
    <property type="project" value="TreeGrafter"/>
</dbReference>
<dbReference type="GO" id="GO:0005509">
    <property type="term" value="F:calcium ion binding"/>
    <property type="evidence" value="ECO:0007669"/>
    <property type="project" value="InterPro"/>
</dbReference>
<dbReference type="CDD" id="cd00051">
    <property type="entry name" value="EFh"/>
    <property type="match status" value="1"/>
</dbReference>
<dbReference type="FunFam" id="1.10.238.10:FF:000163">
    <property type="entry name" value="Calmodulin like 6"/>
    <property type="match status" value="1"/>
</dbReference>
<dbReference type="Gene3D" id="1.10.238.10">
    <property type="entry name" value="EF-hand"/>
    <property type="match status" value="2"/>
</dbReference>
<dbReference type="InterPro" id="IPR050230">
    <property type="entry name" value="CALM/Myosin/TropC-like"/>
</dbReference>
<dbReference type="InterPro" id="IPR011992">
    <property type="entry name" value="EF-hand-dom_pair"/>
</dbReference>
<dbReference type="InterPro" id="IPR018247">
    <property type="entry name" value="EF_Hand_1_Ca_BS"/>
</dbReference>
<dbReference type="InterPro" id="IPR002048">
    <property type="entry name" value="EF_hand_dom"/>
</dbReference>
<dbReference type="PANTHER" id="PTHR23048:SF56">
    <property type="entry name" value="CALMODULIN 2"/>
    <property type="match status" value="1"/>
</dbReference>
<dbReference type="PANTHER" id="PTHR23048">
    <property type="entry name" value="MYOSIN LIGHT CHAIN 1, 3"/>
    <property type="match status" value="1"/>
</dbReference>
<dbReference type="Pfam" id="PF13499">
    <property type="entry name" value="EF-hand_7"/>
    <property type="match status" value="1"/>
</dbReference>
<dbReference type="Pfam" id="PF13833">
    <property type="entry name" value="EF-hand_8"/>
    <property type="match status" value="1"/>
</dbReference>
<dbReference type="SMART" id="SM00054">
    <property type="entry name" value="EFh"/>
    <property type="match status" value="4"/>
</dbReference>
<dbReference type="SUPFAM" id="SSF47473">
    <property type="entry name" value="EF-hand"/>
    <property type="match status" value="1"/>
</dbReference>
<dbReference type="PROSITE" id="PS00018">
    <property type="entry name" value="EF_HAND_1"/>
    <property type="match status" value="1"/>
</dbReference>
<dbReference type="PROSITE" id="PS50222">
    <property type="entry name" value="EF_HAND_2"/>
    <property type="match status" value="4"/>
</dbReference>
<protein>
    <recommendedName>
        <fullName>Calglandulin</fullName>
    </recommendedName>
</protein>
<name>CALGL_NOTSC</name>
<accession>Q3SB12</accession>
<keyword id="KW-0106">Calcium</keyword>
<keyword id="KW-0963">Cytoplasm</keyword>
<keyword id="KW-0479">Metal-binding</keyword>
<keyword id="KW-0677">Repeat</keyword>
<evidence type="ECO:0000250" key="1"/>
<evidence type="ECO:0000255" key="2">
    <source>
        <dbReference type="PROSITE-ProRule" id="PRU00448"/>
    </source>
</evidence>
<evidence type="ECO:0000305" key="3"/>
<comment type="function">
    <text evidence="1">May be involved in the cellular control mechanism of the secretion of toxins from the gland into the venom.</text>
</comment>
<comment type="subcellular location">
    <subcellularLocation>
        <location evidence="3">Cytoplasm</location>
    </subcellularLocation>
    <text evidence="1">Not found in venom.</text>
</comment>
<comment type="tissue specificity">
    <text>Expressed by the venom gland.</text>
</comment>
<comment type="similarity">
    <text evidence="3">Belongs to the calmodulin family. Calglandulin subfamily.</text>
</comment>
<feature type="chain" id="PRO_0000073551" description="Calglandulin">
    <location>
        <begin position="1"/>
        <end position="156"/>
    </location>
</feature>
<feature type="domain" description="EF-hand 1" evidence="2">
    <location>
        <begin position="8"/>
        <end position="43"/>
    </location>
</feature>
<feature type="domain" description="EF-hand 2" evidence="2">
    <location>
        <begin position="44"/>
        <end position="79"/>
    </location>
</feature>
<feature type="domain" description="EF-hand 3" evidence="2">
    <location>
        <begin position="82"/>
        <end position="117"/>
    </location>
</feature>
<feature type="domain" description="EF-hand 4" evidence="2">
    <location>
        <begin position="118"/>
        <end position="153"/>
    </location>
</feature>
<feature type="binding site" evidence="2">
    <location>
        <position position="131"/>
    </location>
    <ligand>
        <name>Ca(2+)</name>
        <dbReference type="ChEBI" id="CHEBI:29108"/>
    </ligand>
</feature>
<feature type="binding site" evidence="2">
    <location>
        <position position="133"/>
    </location>
    <ligand>
        <name>Ca(2+)</name>
        <dbReference type="ChEBI" id="CHEBI:29108"/>
    </ligand>
</feature>
<feature type="binding site" evidence="2">
    <location>
        <position position="135"/>
    </location>
    <ligand>
        <name>Ca(2+)</name>
        <dbReference type="ChEBI" id="CHEBI:29108"/>
    </ligand>
</feature>
<feature type="binding site" evidence="2">
    <location>
        <position position="137"/>
    </location>
    <ligand>
        <name>Ca(2+)</name>
        <dbReference type="ChEBI" id="CHEBI:29108"/>
    </ligand>
</feature>
<feature type="binding site" evidence="2">
    <location>
        <position position="142"/>
    </location>
    <ligand>
        <name>Ca(2+)</name>
        <dbReference type="ChEBI" id="CHEBI:29108"/>
    </ligand>
</feature>
<proteinExistence type="evidence at transcript level"/>
<sequence length="156" mass="17767">MAATLTPEQITEYKGIFEMFDEEGNGLVKTDDLESLMSLIGINPTKRDLANMAKDVDKDKKGTFNCDGFLVLMGIYHEKSKNQDEELRAAFKVFDKEHKGYIEWDTLKYVLMNAGEPLNEHEAELMMKEADKDGDGTIDYEEFVAMMTGESFKLTQ</sequence>
<organism>
    <name type="scientific">Notechis scutatus scutatus</name>
    <name type="common">Mainland tiger snake</name>
    <name type="synonym">Common tiger snake</name>
    <dbReference type="NCBI Taxonomy" id="70142"/>
    <lineage>
        <taxon>Eukaryota</taxon>
        <taxon>Metazoa</taxon>
        <taxon>Chordata</taxon>
        <taxon>Craniata</taxon>
        <taxon>Vertebrata</taxon>
        <taxon>Euteleostomi</taxon>
        <taxon>Lepidosauria</taxon>
        <taxon>Squamata</taxon>
        <taxon>Bifurcata</taxon>
        <taxon>Unidentata</taxon>
        <taxon>Episquamata</taxon>
        <taxon>Toxicofera</taxon>
        <taxon>Serpentes</taxon>
        <taxon>Colubroidea</taxon>
        <taxon>Elapidae</taxon>
        <taxon>Hydrophiinae</taxon>
        <taxon>Notechis</taxon>
    </lineage>
</organism>
<reference key="1">
    <citation type="journal article" date="2005" name="Cell. Mol. Life Sci.">
        <title>Identification and analysis of venom gland-specific genes from the coastal taipan (Oxyuranus scutellatus) and related species.</title>
        <authorList>
            <person name="St Pierre L."/>
            <person name="Woods R."/>
            <person name="Earl S.T.H."/>
            <person name="Masci P.P."/>
            <person name="Lavin M.F."/>
        </authorList>
    </citation>
    <scope>NUCLEOTIDE SEQUENCE [MRNA]</scope>
    <source>
        <tissue>Venom gland</tissue>
    </source>
</reference>